<reference key="1">
    <citation type="journal article" date="2005" name="Science">
        <title>The transcriptional landscape of the mammalian genome.</title>
        <authorList>
            <person name="Carninci P."/>
            <person name="Kasukawa T."/>
            <person name="Katayama S."/>
            <person name="Gough J."/>
            <person name="Frith M.C."/>
            <person name="Maeda N."/>
            <person name="Oyama R."/>
            <person name="Ravasi T."/>
            <person name="Lenhard B."/>
            <person name="Wells C."/>
            <person name="Kodzius R."/>
            <person name="Shimokawa K."/>
            <person name="Bajic V.B."/>
            <person name="Brenner S.E."/>
            <person name="Batalov S."/>
            <person name="Forrest A.R."/>
            <person name="Zavolan M."/>
            <person name="Davis M.J."/>
            <person name="Wilming L.G."/>
            <person name="Aidinis V."/>
            <person name="Allen J.E."/>
            <person name="Ambesi-Impiombato A."/>
            <person name="Apweiler R."/>
            <person name="Aturaliya R.N."/>
            <person name="Bailey T.L."/>
            <person name="Bansal M."/>
            <person name="Baxter L."/>
            <person name="Beisel K.W."/>
            <person name="Bersano T."/>
            <person name="Bono H."/>
            <person name="Chalk A.M."/>
            <person name="Chiu K.P."/>
            <person name="Choudhary V."/>
            <person name="Christoffels A."/>
            <person name="Clutterbuck D.R."/>
            <person name="Crowe M.L."/>
            <person name="Dalla E."/>
            <person name="Dalrymple B.P."/>
            <person name="de Bono B."/>
            <person name="Della Gatta G."/>
            <person name="di Bernardo D."/>
            <person name="Down T."/>
            <person name="Engstrom P."/>
            <person name="Fagiolini M."/>
            <person name="Faulkner G."/>
            <person name="Fletcher C.F."/>
            <person name="Fukushima T."/>
            <person name="Furuno M."/>
            <person name="Futaki S."/>
            <person name="Gariboldi M."/>
            <person name="Georgii-Hemming P."/>
            <person name="Gingeras T.R."/>
            <person name="Gojobori T."/>
            <person name="Green R.E."/>
            <person name="Gustincich S."/>
            <person name="Harbers M."/>
            <person name="Hayashi Y."/>
            <person name="Hensch T.K."/>
            <person name="Hirokawa N."/>
            <person name="Hill D."/>
            <person name="Huminiecki L."/>
            <person name="Iacono M."/>
            <person name="Ikeo K."/>
            <person name="Iwama A."/>
            <person name="Ishikawa T."/>
            <person name="Jakt M."/>
            <person name="Kanapin A."/>
            <person name="Katoh M."/>
            <person name="Kawasawa Y."/>
            <person name="Kelso J."/>
            <person name="Kitamura H."/>
            <person name="Kitano H."/>
            <person name="Kollias G."/>
            <person name="Krishnan S.P."/>
            <person name="Kruger A."/>
            <person name="Kummerfeld S.K."/>
            <person name="Kurochkin I.V."/>
            <person name="Lareau L.F."/>
            <person name="Lazarevic D."/>
            <person name="Lipovich L."/>
            <person name="Liu J."/>
            <person name="Liuni S."/>
            <person name="McWilliam S."/>
            <person name="Madan Babu M."/>
            <person name="Madera M."/>
            <person name="Marchionni L."/>
            <person name="Matsuda H."/>
            <person name="Matsuzawa S."/>
            <person name="Miki H."/>
            <person name="Mignone F."/>
            <person name="Miyake S."/>
            <person name="Morris K."/>
            <person name="Mottagui-Tabar S."/>
            <person name="Mulder N."/>
            <person name="Nakano N."/>
            <person name="Nakauchi H."/>
            <person name="Ng P."/>
            <person name="Nilsson R."/>
            <person name="Nishiguchi S."/>
            <person name="Nishikawa S."/>
            <person name="Nori F."/>
            <person name="Ohara O."/>
            <person name="Okazaki Y."/>
            <person name="Orlando V."/>
            <person name="Pang K.C."/>
            <person name="Pavan W.J."/>
            <person name="Pavesi G."/>
            <person name="Pesole G."/>
            <person name="Petrovsky N."/>
            <person name="Piazza S."/>
            <person name="Reed J."/>
            <person name="Reid J.F."/>
            <person name="Ring B.Z."/>
            <person name="Ringwald M."/>
            <person name="Rost B."/>
            <person name="Ruan Y."/>
            <person name="Salzberg S.L."/>
            <person name="Sandelin A."/>
            <person name="Schneider C."/>
            <person name="Schoenbach C."/>
            <person name="Sekiguchi K."/>
            <person name="Semple C.A."/>
            <person name="Seno S."/>
            <person name="Sessa L."/>
            <person name="Sheng Y."/>
            <person name="Shibata Y."/>
            <person name="Shimada H."/>
            <person name="Shimada K."/>
            <person name="Silva D."/>
            <person name="Sinclair B."/>
            <person name="Sperling S."/>
            <person name="Stupka E."/>
            <person name="Sugiura K."/>
            <person name="Sultana R."/>
            <person name="Takenaka Y."/>
            <person name="Taki K."/>
            <person name="Tammoja K."/>
            <person name="Tan S.L."/>
            <person name="Tang S."/>
            <person name="Taylor M.S."/>
            <person name="Tegner J."/>
            <person name="Teichmann S.A."/>
            <person name="Ueda H.R."/>
            <person name="van Nimwegen E."/>
            <person name="Verardo R."/>
            <person name="Wei C.L."/>
            <person name="Yagi K."/>
            <person name="Yamanishi H."/>
            <person name="Zabarovsky E."/>
            <person name="Zhu S."/>
            <person name="Zimmer A."/>
            <person name="Hide W."/>
            <person name="Bult C."/>
            <person name="Grimmond S.M."/>
            <person name="Teasdale R.D."/>
            <person name="Liu E.T."/>
            <person name="Brusic V."/>
            <person name="Quackenbush J."/>
            <person name="Wahlestedt C."/>
            <person name="Mattick J.S."/>
            <person name="Hume D.A."/>
            <person name="Kai C."/>
            <person name="Sasaki D."/>
            <person name="Tomaru Y."/>
            <person name="Fukuda S."/>
            <person name="Kanamori-Katayama M."/>
            <person name="Suzuki M."/>
            <person name="Aoki J."/>
            <person name="Arakawa T."/>
            <person name="Iida J."/>
            <person name="Imamura K."/>
            <person name="Itoh M."/>
            <person name="Kato T."/>
            <person name="Kawaji H."/>
            <person name="Kawagashira N."/>
            <person name="Kawashima T."/>
            <person name="Kojima M."/>
            <person name="Kondo S."/>
            <person name="Konno H."/>
            <person name="Nakano K."/>
            <person name="Ninomiya N."/>
            <person name="Nishio T."/>
            <person name="Okada M."/>
            <person name="Plessy C."/>
            <person name="Shibata K."/>
            <person name="Shiraki T."/>
            <person name="Suzuki S."/>
            <person name="Tagami M."/>
            <person name="Waki K."/>
            <person name="Watahiki A."/>
            <person name="Okamura-Oho Y."/>
            <person name="Suzuki H."/>
            <person name="Kawai J."/>
            <person name="Hayashizaki Y."/>
        </authorList>
    </citation>
    <scope>NUCLEOTIDE SEQUENCE [LARGE SCALE MRNA]</scope>
    <source>
        <strain>C57BL/6J</strain>
        <tissue>Kidney</tissue>
    </source>
</reference>
<reference key="2">
    <citation type="journal article" date="2004" name="Genome Res.">
        <title>The status, quality, and expansion of the NIH full-length cDNA project: the Mammalian Gene Collection (MGC).</title>
        <authorList>
            <consortium name="The MGC Project Team"/>
        </authorList>
    </citation>
    <scope>NUCLEOTIDE SEQUENCE [LARGE SCALE MRNA]</scope>
</reference>
<proteinExistence type="inferred from homology"/>
<keyword id="KW-0472">Membrane</keyword>
<keyword id="KW-1185">Reference proteome</keyword>
<keyword id="KW-0732">Signal</keyword>
<keyword id="KW-0812">Transmembrane</keyword>
<keyword id="KW-1133">Transmembrane helix</keyword>
<comment type="subcellular location">
    <subcellularLocation>
        <location evidence="2">Membrane</location>
        <topology evidence="2">Single-pass type I membrane protein</topology>
    </subcellularLocation>
</comment>
<comment type="sequence caution" evidence="2">
    <conflict type="erroneous initiation">
        <sequence resource="EMBL-CDS" id="BAB32372"/>
    </conflict>
    <text>Extended N-terminus.</text>
</comment>
<evidence type="ECO:0000255" key="1"/>
<evidence type="ECO:0000305" key="2"/>
<feature type="signal peptide" evidence="1">
    <location>
        <begin position="1"/>
        <end position="35"/>
    </location>
</feature>
<feature type="chain" id="PRO_0000337055" description="Transmembrane protein 213">
    <location>
        <begin position="36"/>
        <end position="116"/>
    </location>
</feature>
<feature type="topological domain" description="Extracellular" evidence="1">
    <location>
        <begin position="36"/>
        <end position="79"/>
    </location>
</feature>
<feature type="transmembrane region" description="Helical" evidence="1">
    <location>
        <begin position="80"/>
        <end position="100"/>
    </location>
</feature>
<feature type="topological domain" description="Cytoplasmic" evidence="1">
    <location>
        <begin position="101"/>
        <end position="116"/>
    </location>
</feature>
<gene>
    <name type="primary">Tmem213</name>
</gene>
<dbReference type="EMBL" id="AK021320">
    <property type="protein sequence ID" value="BAB32372.1"/>
    <property type="status" value="ALT_INIT"/>
    <property type="molecule type" value="mRNA"/>
</dbReference>
<dbReference type="EMBL" id="BC104374">
    <property type="protein sequence ID" value="AAI04375.1"/>
    <property type="molecule type" value="mRNA"/>
</dbReference>
<dbReference type="EMBL" id="BC104375">
    <property type="protein sequence ID" value="AAI04376.1"/>
    <property type="molecule type" value="mRNA"/>
</dbReference>
<dbReference type="EMBL" id="BC119477">
    <property type="protein sequence ID" value="AAI19478.1"/>
    <property type="molecule type" value="mRNA"/>
</dbReference>
<dbReference type="RefSeq" id="NP_084197.1">
    <property type="nucleotide sequence ID" value="NM_029921.1"/>
</dbReference>
<dbReference type="SMR" id="Q08EA8"/>
<dbReference type="FunCoup" id="Q08EA8">
    <property type="interactions" value="1"/>
</dbReference>
<dbReference type="STRING" id="10090.ENSMUSP00000031851"/>
<dbReference type="PhosphoSitePlus" id="Q08EA8"/>
<dbReference type="PaxDb" id="10090-ENSMUSP00000031851"/>
<dbReference type="ProteomicsDB" id="258922"/>
<dbReference type="GeneID" id="77522"/>
<dbReference type="KEGG" id="mmu:77522"/>
<dbReference type="UCSC" id="uc009bjq.2">
    <property type="organism name" value="mouse"/>
</dbReference>
<dbReference type="AGR" id="MGI:1924772"/>
<dbReference type="CTD" id="155006"/>
<dbReference type="MGI" id="MGI:1924772">
    <property type="gene designation" value="Tmem213"/>
</dbReference>
<dbReference type="eggNOG" id="ENOG502SA74">
    <property type="taxonomic scope" value="Eukaryota"/>
</dbReference>
<dbReference type="InParanoid" id="Q08EA8"/>
<dbReference type="OrthoDB" id="9949160at2759"/>
<dbReference type="PhylomeDB" id="Q08EA8"/>
<dbReference type="TreeFam" id="TF336187"/>
<dbReference type="BioGRID-ORCS" id="77522">
    <property type="hits" value="2 hits in 75 CRISPR screens"/>
</dbReference>
<dbReference type="PRO" id="PR:Q08EA8"/>
<dbReference type="Proteomes" id="UP000000589">
    <property type="component" value="Unplaced"/>
</dbReference>
<dbReference type="RNAct" id="Q08EA8">
    <property type="molecule type" value="protein"/>
</dbReference>
<dbReference type="GO" id="GO:0016020">
    <property type="term" value="C:membrane"/>
    <property type="evidence" value="ECO:0007669"/>
    <property type="project" value="UniProtKB-SubCell"/>
</dbReference>
<dbReference type="InterPro" id="IPR028121">
    <property type="entry name" value="TMEM213"/>
</dbReference>
<dbReference type="PANTHER" id="PTHR36293">
    <property type="entry name" value="TRANSMEMBRANE PROTEIN 213"/>
    <property type="match status" value="1"/>
</dbReference>
<dbReference type="PANTHER" id="PTHR36293:SF1">
    <property type="entry name" value="TRANSMEMBRANE PROTEIN 213"/>
    <property type="match status" value="1"/>
</dbReference>
<dbReference type="Pfam" id="PF15192">
    <property type="entry name" value="TMEM213"/>
    <property type="match status" value="1"/>
</dbReference>
<name>TM213_MOUSE</name>
<accession>Q08EA8</accession>
<accession>Q9D1U9</accession>
<protein>
    <recommendedName>
        <fullName>Transmembrane protein 213</fullName>
    </recommendedName>
</protein>
<sequence>MAQSGVFLRNPGHLTSAPQAALLFSLVLTSFHLSCGTETSSSNSTLSAHHPDPGTLEQCANVDFCPLASLCCRASVDEYGWIAAAVGWSFWFLTLILLCVDKLMKLTPEEPKDLAA</sequence>
<organism>
    <name type="scientific">Mus musculus</name>
    <name type="common">Mouse</name>
    <dbReference type="NCBI Taxonomy" id="10090"/>
    <lineage>
        <taxon>Eukaryota</taxon>
        <taxon>Metazoa</taxon>
        <taxon>Chordata</taxon>
        <taxon>Craniata</taxon>
        <taxon>Vertebrata</taxon>
        <taxon>Euteleostomi</taxon>
        <taxon>Mammalia</taxon>
        <taxon>Eutheria</taxon>
        <taxon>Euarchontoglires</taxon>
        <taxon>Glires</taxon>
        <taxon>Rodentia</taxon>
        <taxon>Myomorpha</taxon>
        <taxon>Muroidea</taxon>
        <taxon>Muridae</taxon>
        <taxon>Murinae</taxon>
        <taxon>Mus</taxon>
        <taxon>Mus</taxon>
    </lineage>
</organism>